<dbReference type="EMBL" id="CP000783">
    <property type="protein sequence ID" value="ABU78833.1"/>
    <property type="molecule type" value="Genomic_DNA"/>
</dbReference>
<dbReference type="RefSeq" id="WP_004385120.1">
    <property type="nucleotide sequence ID" value="NC_009778.1"/>
</dbReference>
<dbReference type="SMR" id="A7MNR4"/>
<dbReference type="GeneID" id="92214654"/>
<dbReference type="KEGG" id="esa:ESA_03623"/>
<dbReference type="HOGENOM" id="CLU_097103_2_0_6"/>
<dbReference type="UniPathway" id="UPA00068"/>
<dbReference type="Proteomes" id="UP000000260">
    <property type="component" value="Chromosome"/>
</dbReference>
<dbReference type="GO" id="GO:0005737">
    <property type="term" value="C:cytoplasm"/>
    <property type="evidence" value="ECO:0007669"/>
    <property type="project" value="UniProtKB-SubCell"/>
</dbReference>
<dbReference type="GO" id="GO:0034618">
    <property type="term" value="F:arginine binding"/>
    <property type="evidence" value="ECO:0007669"/>
    <property type="project" value="InterPro"/>
</dbReference>
<dbReference type="GO" id="GO:0003677">
    <property type="term" value="F:DNA binding"/>
    <property type="evidence" value="ECO:0007669"/>
    <property type="project" value="UniProtKB-KW"/>
</dbReference>
<dbReference type="GO" id="GO:0003700">
    <property type="term" value="F:DNA-binding transcription factor activity"/>
    <property type="evidence" value="ECO:0007669"/>
    <property type="project" value="UniProtKB-UniRule"/>
</dbReference>
<dbReference type="GO" id="GO:0006526">
    <property type="term" value="P:L-arginine biosynthetic process"/>
    <property type="evidence" value="ECO:0007669"/>
    <property type="project" value="UniProtKB-UniPathway"/>
</dbReference>
<dbReference type="GO" id="GO:0051259">
    <property type="term" value="P:protein complex oligomerization"/>
    <property type="evidence" value="ECO:0007669"/>
    <property type="project" value="InterPro"/>
</dbReference>
<dbReference type="GO" id="GO:1900079">
    <property type="term" value="P:regulation of arginine biosynthetic process"/>
    <property type="evidence" value="ECO:0007669"/>
    <property type="project" value="UniProtKB-UniRule"/>
</dbReference>
<dbReference type="FunFam" id="1.10.10.10:FF:000074">
    <property type="entry name" value="Arginine repressor"/>
    <property type="match status" value="1"/>
</dbReference>
<dbReference type="FunFam" id="3.30.1360.40:FF:000004">
    <property type="entry name" value="Arginine repressor"/>
    <property type="match status" value="1"/>
</dbReference>
<dbReference type="Gene3D" id="3.30.1360.40">
    <property type="match status" value="1"/>
</dbReference>
<dbReference type="Gene3D" id="1.10.10.10">
    <property type="entry name" value="Winged helix-like DNA-binding domain superfamily/Winged helix DNA-binding domain"/>
    <property type="match status" value="1"/>
</dbReference>
<dbReference type="HAMAP" id="MF_00173">
    <property type="entry name" value="Arg_repressor"/>
    <property type="match status" value="1"/>
</dbReference>
<dbReference type="InterPro" id="IPR001669">
    <property type="entry name" value="Arg_repress"/>
</dbReference>
<dbReference type="InterPro" id="IPR020899">
    <property type="entry name" value="Arg_repress_C"/>
</dbReference>
<dbReference type="InterPro" id="IPR036251">
    <property type="entry name" value="Arg_repress_C_sf"/>
</dbReference>
<dbReference type="InterPro" id="IPR020900">
    <property type="entry name" value="Arg_repress_DNA-bd"/>
</dbReference>
<dbReference type="InterPro" id="IPR036388">
    <property type="entry name" value="WH-like_DNA-bd_sf"/>
</dbReference>
<dbReference type="InterPro" id="IPR036390">
    <property type="entry name" value="WH_DNA-bd_sf"/>
</dbReference>
<dbReference type="NCBIfam" id="TIGR01529">
    <property type="entry name" value="argR_whole"/>
    <property type="match status" value="1"/>
</dbReference>
<dbReference type="NCBIfam" id="NF003457">
    <property type="entry name" value="PRK05066.1"/>
    <property type="match status" value="1"/>
</dbReference>
<dbReference type="PANTHER" id="PTHR34471">
    <property type="entry name" value="ARGININE REPRESSOR"/>
    <property type="match status" value="1"/>
</dbReference>
<dbReference type="PANTHER" id="PTHR34471:SF1">
    <property type="entry name" value="ARGININE REPRESSOR"/>
    <property type="match status" value="1"/>
</dbReference>
<dbReference type="Pfam" id="PF01316">
    <property type="entry name" value="Arg_repressor"/>
    <property type="match status" value="1"/>
</dbReference>
<dbReference type="Pfam" id="PF02863">
    <property type="entry name" value="Arg_repressor_C"/>
    <property type="match status" value="1"/>
</dbReference>
<dbReference type="PRINTS" id="PR01467">
    <property type="entry name" value="ARGREPRESSOR"/>
</dbReference>
<dbReference type="SUPFAM" id="SSF55252">
    <property type="entry name" value="C-terminal domain of arginine repressor"/>
    <property type="match status" value="1"/>
</dbReference>
<dbReference type="SUPFAM" id="SSF46785">
    <property type="entry name" value="Winged helix' DNA-binding domain"/>
    <property type="match status" value="1"/>
</dbReference>
<gene>
    <name evidence="1" type="primary">argR</name>
    <name type="ordered locus">ESA_03623</name>
</gene>
<proteinExistence type="inferred from homology"/>
<evidence type="ECO:0000255" key="1">
    <source>
        <dbReference type="HAMAP-Rule" id="MF_00173"/>
    </source>
</evidence>
<keyword id="KW-0028">Amino-acid biosynthesis</keyword>
<keyword id="KW-0055">Arginine biosynthesis</keyword>
<keyword id="KW-0963">Cytoplasm</keyword>
<keyword id="KW-0238">DNA-binding</keyword>
<keyword id="KW-1185">Reference proteome</keyword>
<keyword id="KW-0678">Repressor</keyword>
<keyword id="KW-0804">Transcription</keyword>
<keyword id="KW-0805">Transcription regulation</keyword>
<sequence length="156" mass="17106">MRSSAKQEELVKAFKALLKEEKFSSQGEIVQALQDQGFENINQSKVSRMLTKFGAVRTRNAKMEMVYCLPVELGVPTTSSPLKNLVLDIDYNDAVVVIHTSPGAAQLIARLLDSLGKAEGILGTIAGDDTIFTTPARGFTVKDLYEAILVLFEQEL</sequence>
<feature type="chain" id="PRO_1000023566" description="Arginine repressor">
    <location>
        <begin position="1"/>
        <end position="156"/>
    </location>
</feature>
<name>ARGR_CROS8</name>
<organism>
    <name type="scientific">Cronobacter sakazakii (strain ATCC BAA-894)</name>
    <name type="common">Enterobacter sakazakii</name>
    <dbReference type="NCBI Taxonomy" id="290339"/>
    <lineage>
        <taxon>Bacteria</taxon>
        <taxon>Pseudomonadati</taxon>
        <taxon>Pseudomonadota</taxon>
        <taxon>Gammaproteobacteria</taxon>
        <taxon>Enterobacterales</taxon>
        <taxon>Enterobacteriaceae</taxon>
        <taxon>Cronobacter</taxon>
    </lineage>
</organism>
<protein>
    <recommendedName>
        <fullName evidence="1">Arginine repressor</fullName>
    </recommendedName>
</protein>
<accession>A7MNR4</accession>
<reference key="1">
    <citation type="journal article" date="2010" name="PLoS ONE">
        <title>Genome sequence of Cronobacter sakazakii BAA-894 and comparative genomic hybridization analysis with other Cronobacter species.</title>
        <authorList>
            <person name="Kucerova E."/>
            <person name="Clifton S.W."/>
            <person name="Xia X.Q."/>
            <person name="Long F."/>
            <person name="Porwollik S."/>
            <person name="Fulton L."/>
            <person name="Fronick C."/>
            <person name="Minx P."/>
            <person name="Kyung K."/>
            <person name="Warren W."/>
            <person name="Fulton R."/>
            <person name="Feng D."/>
            <person name="Wollam A."/>
            <person name="Shah N."/>
            <person name="Bhonagiri V."/>
            <person name="Nash W.E."/>
            <person name="Hallsworth-Pepin K."/>
            <person name="Wilson R.K."/>
            <person name="McClelland M."/>
            <person name="Forsythe S.J."/>
        </authorList>
    </citation>
    <scope>NUCLEOTIDE SEQUENCE [LARGE SCALE GENOMIC DNA]</scope>
    <source>
        <strain>ATCC BAA-894</strain>
    </source>
</reference>
<comment type="function">
    <text evidence="1">Regulates arginine biosynthesis genes.</text>
</comment>
<comment type="pathway">
    <text>Amino-acid biosynthesis; L-arginine biosynthesis [regulation].</text>
</comment>
<comment type="subcellular location">
    <subcellularLocation>
        <location evidence="1">Cytoplasm</location>
    </subcellularLocation>
</comment>
<comment type="similarity">
    <text evidence="1">Belongs to the ArgR family.</text>
</comment>